<proteinExistence type="inferred from homology"/>
<gene>
    <name evidence="7" type="primary">pdeA</name>
    <name type="ordered locus">LMRG_02481</name>
</gene>
<name>PDEA_LISM4</name>
<organism>
    <name type="scientific">Listeria monocytogenes serotype 1/2a (strain 10403S)</name>
    <dbReference type="NCBI Taxonomy" id="393133"/>
    <lineage>
        <taxon>Bacteria</taxon>
        <taxon>Bacillati</taxon>
        <taxon>Bacillota</taxon>
        <taxon>Bacilli</taxon>
        <taxon>Bacillales</taxon>
        <taxon>Listeriaceae</taxon>
        <taxon>Listeria</taxon>
    </lineage>
</organism>
<protein>
    <recommendedName>
        <fullName evidence="7">Cyclic-di-AMP phosphodiesterase PdeA</fullName>
        <shortName>c-di-AMP phosphodiesterase</shortName>
        <ecNumber>3.1.4.59</ecNumber>
    </recommendedName>
</protein>
<sequence>MSGYFQKRMLKYPLYGLIAATIILSVITFFFSWWLSALVVVGGIILTVAMFYFEYRLNEDVQLYVSNLTYRIKRSEEEALVEMPMGILLYDEHYKIEWVNPFMSKYFDKAELIGESLEEVGPEFLDVITGNDEKGIMSIAWRDHRFDTIVKRKERILYLYDRTEYYDLNKKFQANKSVFAVIFLDNYDEWAQGMDDRRRSALNNLVTSMLTNWAREHRIYLKRISTDRFMAFLTEEMLKRLEEEKFQILDRIRERTSKQNIPLTLSIGIGYKEDDLIQLADLAQSSLDLALGRGGDQVVIKQPEGKVRFYGGKTNPMEKRTRVRARVISQALQELITQSDQVFVMGHRYPDMDVIGSSLGVMRIAEMNDRNAYVVVEPGKMSPDVKRLMNEIEEYPNVIKNIVTPQVALENITEKSLLVVVDTHKPSMVINKELLDSATNVVVVDHHRRSEEFVGSPVLVYIEPYASSTAELITELFEYQPDLEQVGKIEATALLSGIVVDTKNFTLRTGSRTFDAASYLRSLGADTILVQQFLKEDITTFTQRSRLVESLEIYHDGMAIATGHEDEEFGTVIAAQAADTMLSMEGVQASFVITLRPDKLIGISARSLGQINVQVIMEKLGGGGHLSNAATQLKDVTIAEAEKQLISAIDAYWKGET</sequence>
<accession>A0A0H3GCG4</accession>
<dbReference type="EC" id="3.1.4.59"/>
<dbReference type="EMBL" id="CP002002">
    <property type="protein sequence ID" value="AEO05072.1"/>
    <property type="molecule type" value="Genomic_DNA"/>
</dbReference>
<dbReference type="RefSeq" id="WP_003721675.1">
    <property type="nucleotide sequence ID" value="NC_017544.1"/>
</dbReference>
<dbReference type="SMR" id="A0A0H3GCG4"/>
<dbReference type="KEGG" id="lmt:LMRG_02481"/>
<dbReference type="HOGENOM" id="CLU_018278_0_0_9"/>
<dbReference type="Proteomes" id="UP000001288">
    <property type="component" value="Chromosome"/>
</dbReference>
<dbReference type="GO" id="GO:0005886">
    <property type="term" value="C:plasma membrane"/>
    <property type="evidence" value="ECO:0007669"/>
    <property type="project" value="UniProtKB-SubCell"/>
</dbReference>
<dbReference type="GO" id="GO:0106409">
    <property type="term" value="F:cyclic-di-AMP phosphodiesterase activity"/>
    <property type="evidence" value="ECO:0007669"/>
    <property type="project" value="UniProtKB-EC"/>
</dbReference>
<dbReference type="GO" id="GO:0016787">
    <property type="term" value="F:hydrolase activity"/>
    <property type="evidence" value="ECO:0007669"/>
    <property type="project" value="UniProtKB-KW"/>
</dbReference>
<dbReference type="GO" id="GO:0046872">
    <property type="term" value="F:metal ion binding"/>
    <property type="evidence" value="ECO:0007669"/>
    <property type="project" value="UniProtKB-KW"/>
</dbReference>
<dbReference type="GO" id="GO:0003676">
    <property type="term" value="F:nucleic acid binding"/>
    <property type="evidence" value="ECO:0007669"/>
    <property type="project" value="InterPro"/>
</dbReference>
<dbReference type="FunFam" id="3.10.310.30:FF:000002">
    <property type="entry name" value="Cyclic-di-AMP phosphodiesterase"/>
    <property type="match status" value="1"/>
</dbReference>
<dbReference type="FunFam" id="3.90.1640.10:FF:000002">
    <property type="entry name" value="Cyclic-di-AMP phosphodiesterase"/>
    <property type="match status" value="1"/>
</dbReference>
<dbReference type="Gene3D" id="3.10.310.30">
    <property type="match status" value="1"/>
</dbReference>
<dbReference type="Gene3D" id="3.90.1640.10">
    <property type="entry name" value="inorganic pyrophosphatase (n-terminal core)"/>
    <property type="match status" value="1"/>
</dbReference>
<dbReference type="Gene3D" id="3.30.450.20">
    <property type="entry name" value="PAS domain"/>
    <property type="match status" value="1"/>
</dbReference>
<dbReference type="InterPro" id="IPR001667">
    <property type="entry name" value="DDH_dom"/>
</dbReference>
<dbReference type="InterPro" id="IPR038763">
    <property type="entry name" value="DHH_sf"/>
</dbReference>
<dbReference type="InterPro" id="IPR003156">
    <property type="entry name" value="DHHA1_dom"/>
</dbReference>
<dbReference type="InterPro" id="IPR049553">
    <property type="entry name" value="GdpP-like_PAS"/>
</dbReference>
<dbReference type="InterPro" id="IPR014528">
    <property type="entry name" value="GdpP/PdeA"/>
</dbReference>
<dbReference type="InterPro" id="IPR000160">
    <property type="entry name" value="GGDEF_dom"/>
</dbReference>
<dbReference type="InterPro" id="IPR051319">
    <property type="entry name" value="Oligoribo/pAp-PDE_c-di-AMP_PDE"/>
</dbReference>
<dbReference type="PANTHER" id="PTHR47618">
    <property type="entry name" value="BIFUNCTIONAL OLIGORIBONUCLEASE AND PAP PHOSPHATASE NRNA"/>
    <property type="match status" value="1"/>
</dbReference>
<dbReference type="PANTHER" id="PTHR47618:SF2">
    <property type="entry name" value="CYCLIC-DI-AMP PHOSPHODIESTERASE GDPP"/>
    <property type="match status" value="1"/>
</dbReference>
<dbReference type="Pfam" id="PF01368">
    <property type="entry name" value="DHH"/>
    <property type="match status" value="1"/>
</dbReference>
<dbReference type="Pfam" id="PF02272">
    <property type="entry name" value="DHHA1"/>
    <property type="match status" value="1"/>
</dbReference>
<dbReference type="Pfam" id="PF24898">
    <property type="entry name" value="GGDEF_GdpP"/>
    <property type="match status" value="1"/>
</dbReference>
<dbReference type="Pfam" id="PF21370">
    <property type="entry name" value="PAS_GdpP"/>
    <property type="match status" value="1"/>
</dbReference>
<dbReference type="PIRSF" id="PIRSF026583">
    <property type="entry name" value="YybT"/>
    <property type="match status" value="1"/>
</dbReference>
<dbReference type="SMART" id="SM00267">
    <property type="entry name" value="GGDEF"/>
    <property type="match status" value="1"/>
</dbReference>
<dbReference type="SUPFAM" id="SSF64182">
    <property type="entry name" value="DHH phosphoesterases"/>
    <property type="match status" value="1"/>
</dbReference>
<dbReference type="PROSITE" id="PS50887">
    <property type="entry name" value="GGDEF"/>
    <property type="match status" value="1"/>
</dbReference>
<feature type="chain" id="PRO_0000436052" description="Cyclic-di-AMP phosphodiesterase PdeA">
    <location>
        <begin position="1"/>
        <end position="657"/>
    </location>
</feature>
<feature type="transmembrane region" description="Helical" evidence="2">
    <location>
        <begin position="13"/>
        <end position="35"/>
    </location>
</feature>
<feature type="transmembrane region" description="Helical" evidence="2">
    <location>
        <begin position="37"/>
        <end position="53"/>
    </location>
</feature>
<feature type="domain" description="GGDEF" evidence="3">
    <location>
        <begin position="175"/>
        <end position="303"/>
    </location>
</feature>
<feature type="region of interest" description="PAS-like" evidence="9">
    <location>
        <begin position="74"/>
        <end position="137"/>
    </location>
</feature>
<feature type="region of interest" description="DHH" evidence="9">
    <location>
        <begin position="342"/>
        <end position="498"/>
    </location>
</feature>
<feature type="region of interest" description="DHHA1" evidence="9">
    <location>
        <begin position="592"/>
        <end position="645"/>
    </location>
</feature>
<feature type="binding site" evidence="1">
    <location>
        <position position="347"/>
    </location>
    <ligand>
        <name>Mn(2+)</name>
        <dbReference type="ChEBI" id="CHEBI:29035"/>
        <label>1</label>
    </ligand>
</feature>
<feature type="binding site" evidence="1">
    <location>
        <position position="351"/>
    </location>
    <ligand>
        <name>Mn(2+)</name>
        <dbReference type="ChEBI" id="CHEBI:29035"/>
        <label>1</label>
    </ligand>
</feature>
<feature type="binding site" evidence="1">
    <location>
        <position position="353"/>
    </location>
    <ligand>
        <name>Mn(2+)</name>
        <dbReference type="ChEBI" id="CHEBI:29035"/>
        <label>2</label>
    </ligand>
</feature>
<feature type="binding site" evidence="1">
    <location>
        <position position="422"/>
    </location>
    <ligand>
        <name>Mn(2+)</name>
        <dbReference type="ChEBI" id="CHEBI:29035"/>
        <label>1</label>
    </ligand>
</feature>
<feature type="binding site" evidence="1">
    <location>
        <position position="422"/>
    </location>
    <ligand>
        <name>Mn(2+)</name>
        <dbReference type="ChEBI" id="CHEBI:29035"/>
        <label>2</label>
    </ligand>
</feature>
<feature type="binding site" evidence="1">
    <location>
        <position position="446"/>
    </location>
    <ligand>
        <name>Mn(2+)</name>
        <dbReference type="ChEBI" id="CHEBI:29035"/>
        <label>2</label>
    </ligand>
</feature>
<feature type="binding site" evidence="1">
    <location>
        <position position="501"/>
    </location>
    <ligand>
        <name>Mn(2+)</name>
        <dbReference type="ChEBI" id="CHEBI:29035"/>
        <label>2</label>
    </ligand>
</feature>
<reference key="1">
    <citation type="submission" date="2010-04" db="EMBL/GenBank/DDBJ databases">
        <title>The genome sequence of Listeria monocytogenes strain 10403S.</title>
        <authorList>
            <consortium name="The Broad Institute Genome Sequencing Platform"/>
            <consortium name="The Broad Institute Genome Sequencing Center for Infectious Disease"/>
            <person name="Borowsky M."/>
            <person name="Borodovsky M."/>
            <person name="Young S.K."/>
            <person name="Zeng Q."/>
            <person name="Koehrsen M."/>
            <person name="Fitzgerald M."/>
            <person name="Wiedmann M."/>
            <person name="Swaminathan B."/>
            <person name="Lauer P."/>
            <person name="Portnoy D."/>
            <person name="Cossart P."/>
            <person name="Buchrieser C."/>
            <person name="Higgins D."/>
            <person name="Abouelleil A."/>
            <person name="Alvarado L."/>
            <person name="Arachchi H.M."/>
            <person name="Berlin A."/>
            <person name="Borenstein D."/>
            <person name="Brown A."/>
            <person name="Chapman S.B."/>
            <person name="Chen Z."/>
            <person name="Dunbar C.D."/>
            <person name="Engels R."/>
            <person name="Freedman E."/>
            <person name="Gearin G."/>
            <person name="Gellesch M."/>
            <person name="Goldberg J."/>
            <person name="Griggs A."/>
            <person name="Gujja S."/>
            <person name="Heilman E."/>
            <person name="Heiman D."/>
            <person name="Howarth C."/>
            <person name="Jen D."/>
            <person name="Larson L."/>
            <person name="Lui A."/>
            <person name="MacDonald J."/>
            <person name="Mehta T."/>
            <person name="Montmayeur A."/>
            <person name="Neiman D."/>
            <person name="Park D."/>
            <person name="Pearson M."/>
            <person name="Priest M."/>
            <person name="Richards J."/>
            <person name="Roberts A."/>
            <person name="Saif S."/>
            <person name="Shea T."/>
            <person name="Shenoy N."/>
            <person name="Sisk P."/>
            <person name="Stolte C."/>
            <person name="Sykes S."/>
            <person name="Walk T."/>
            <person name="White J."/>
            <person name="Yandava C."/>
            <person name="Haas B."/>
            <person name="Nusbaum C."/>
            <person name="Birren B."/>
        </authorList>
    </citation>
    <scope>NUCLEOTIDE SEQUENCE [LARGE SCALE GENOMIC DNA]</scope>
    <source>
        <strain>10403S</strain>
    </source>
</reference>
<reference key="2">
    <citation type="journal article" date="2013" name="MBio">
        <title>Cyclic di-AMP is critical for Listeria monocytogenes growth, cell wall homeostasis, and establishment of infection.</title>
        <authorList>
            <person name="Witte C.E."/>
            <person name="Whiteley A.T."/>
            <person name="Burke T.P."/>
            <person name="Sauer J.D."/>
            <person name="Portnoy D.A."/>
            <person name="Woodward J.J."/>
        </authorList>
    </citation>
    <scope>FUNCTION</scope>
    <scope>DOMAIN</scope>
    <scope>DISRUPTION PHENOTYPE</scope>
    <source>
        <strain>10403S</strain>
    </source>
</reference>
<reference key="3">
    <citation type="journal article" date="2015" name="Proc. Natl. Acad. Sci. U.S.A.">
        <title>An HD-domain phosphodiesterase mediates cooperative hydrolysis of c-di-AMP to affect bacterial growth and virulence.</title>
        <authorList>
            <person name="Huynh T.N."/>
            <person name="Luo S."/>
            <person name="Pensinger D."/>
            <person name="Sauer J.D."/>
            <person name="Tong L."/>
            <person name="Woodward J.J."/>
        </authorList>
    </citation>
    <scope>FUNCTION</scope>
    <scope>DISRUPTION PHENOTYPE</scope>
    <source>
        <strain>10403S / JW06</strain>
    </source>
</reference>
<reference key="4">
    <citation type="journal article" date="2015" name="J. Am. Chem. Soc.">
        <title>RNA-based fluorescent biosensors for live cell imaging of second messenger cyclic di-AMP.</title>
        <authorList>
            <person name="Kellenberger C.A."/>
            <person name="Chen C."/>
            <person name="Whiteley A.T."/>
            <person name="Portnoy D.A."/>
            <person name="Hammond M.C."/>
        </authorList>
    </citation>
    <scope>FUNCTION</scope>
    <scope>DOMAIN</scope>
    <scope>DISRUPTION PHENOTYPE</scope>
    <source>
        <strain>10403S</strain>
    </source>
</reference>
<comment type="function">
    <text evidence="1 4 5 6 10">Has phosphodiesterase (PDE) activity against cyclic-di-AMP (c-di-AMP) (PubMed:23716572, PubMed:25965978). Overexpression decreases export of c-di-AMP, leads to slightly increased susceptibility to the antibiotic cefuroxime and somewhat slower growth in macrophages (PubMed:23716572). There are at least 2 PDEs for c-di-AMP in this bacteria (this one and pgpH); this may be the major PDE for intracellular growth in host macrophages (PubMed:25583510). During host infection c-di-AMP is secreted into the host cytoplasm which leads to interferon-beta production and secretion by the host (Probable). c-di-AMP is a second messenger that mediates growth, cell wall stability and virulence (Probable). May monitor cellular heme or NO levels (By similarity).</text>
</comment>
<comment type="catalytic activity">
    <reaction>
        <text>3',3'-c-di-AMP + H2O = 5'-O-phosphonoadenylyl-(3'-&gt;5')-adenosine + H(+)</text>
        <dbReference type="Rhea" id="RHEA:54420"/>
        <dbReference type="ChEBI" id="CHEBI:15377"/>
        <dbReference type="ChEBI" id="CHEBI:15378"/>
        <dbReference type="ChEBI" id="CHEBI:71500"/>
        <dbReference type="ChEBI" id="CHEBI:138171"/>
        <dbReference type="EC" id="3.1.4.59"/>
    </reaction>
</comment>
<comment type="cofactor">
    <cofactor evidence="1">
        <name>heme b</name>
        <dbReference type="ChEBI" id="CHEBI:60344"/>
    </cofactor>
    <text evidence="1">Binds 1 heme (probably heme b) per subunit.</text>
</comment>
<comment type="cofactor">
    <cofactor evidence="1">
        <name>Mn(2+)</name>
        <dbReference type="ChEBI" id="CHEBI:29035"/>
    </cofactor>
    <text evidence="1">Binds 2 Mn(2+) per subunit.</text>
</comment>
<comment type="subcellular location">
    <subcellularLocation>
        <location evidence="2">Cell membrane</location>
        <topology evidence="2">Multi-pass membrane protein</topology>
    </subcellularLocation>
</comment>
<comment type="domain">
    <text evidence="1 4 6">Has a GGDEF domain (residues 175-303) preceded by a PAS-like domain (residues 74-137) which together may have ATPase activity (By similarity). This is followed by a region with a DHH (342-498) and a DHHA1 (592-645) domain which together have c-di-AMP phosphodiesterase activity (PubMed:23716572, PubMed:25965978). The PAS-like domain is important for heme b-binding (By similarity).</text>
</comment>
<comment type="disruption phenotype">
    <text evidence="4 5 6">Disruption leads to increased resistance to pH 2.5, transcription of a number of genes is induced (PubMed:23716572). Grows as well as wild-type in culture and in macrophages (PubMed:23716572). Double pdeA-pgpH mutants have slightly defective growth in culture and in macrophages (PubMed:25583510). Single mutant secretes as much c-di-AMP as wild-type (PubMed:23716572, PubMed:25583510). Double pdeA-pgpH mutant secretes about 4-fold more (PubMed:25583510). Single mutant induces 3.5-fold more interferon-beta (IFN-beta) transcription by macrophages (PubMed:23716572, PubMed:25583510). Double pdeA-pgpH mutants induces about 10-fold more IFN-beta (PubMed:25583510). Double mutant is 10(3)-fold less virulent in mice, suggesting increased bacterial c-di-AMP is detrimental to growth within the host (PubMed:25583510). Single mutant has approximately 2-fold increased intracellular levels of c-di-AMP (PubMed:25965978).</text>
</comment>
<comment type="similarity">
    <text evidence="8">Belongs to the GdpP/PdeA phosphodiesterase family.</text>
</comment>
<keyword id="KW-1003">Cell membrane</keyword>
<keyword id="KW-0349">Heme</keyword>
<keyword id="KW-0378">Hydrolase</keyword>
<keyword id="KW-0408">Iron</keyword>
<keyword id="KW-0464">Manganese</keyword>
<keyword id="KW-0472">Membrane</keyword>
<keyword id="KW-0479">Metal-binding</keyword>
<keyword id="KW-0812">Transmembrane</keyword>
<keyword id="KW-1133">Transmembrane helix</keyword>
<evidence type="ECO:0000250" key="1">
    <source>
        <dbReference type="UniProtKB" id="P37484"/>
    </source>
</evidence>
<evidence type="ECO:0000255" key="2"/>
<evidence type="ECO:0000255" key="3">
    <source>
        <dbReference type="PROSITE-ProRule" id="PRU00095"/>
    </source>
</evidence>
<evidence type="ECO:0000269" key="4">
    <source>
    </source>
</evidence>
<evidence type="ECO:0000269" key="5">
    <source>
    </source>
</evidence>
<evidence type="ECO:0000269" key="6">
    <source>
    </source>
</evidence>
<evidence type="ECO:0000303" key="7">
    <source>
    </source>
</evidence>
<evidence type="ECO:0000305" key="8"/>
<evidence type="ECO:0000305" key="9">
    <source>
    </source>
</evidence>
<evidence type="ECO:0000305" key="10">
    <source>
    </source>
</evidence>